<evidence type="ECO:0000255" key="1">
    <source>
        <dbReference type="HAMAP-Rule" id="MF_01323"/>
    </source>
</evidence>
<name>RPOC1_EMIHU</name>
<sequence length="609" mass="69213">MDRSFDYVKINLASPSRIREWGERKLPNGQVVGEITKPETINYRTLKPEMNGLFCERVFGPVNDWECHCGKYKRIRHKGIVCERCGVEIIDSKVRRHRMGFIELASSVTHVWYVKGRPSKIALILGMTVKELEQIVYFNSYVVTKANKDLNLSYQQLLSEADWLAIDYNDDFSLKENTISIGAEAIKTLLKNVDLQQSASEIRELLPFAKRFFSEKLIRRLRVINQFIASKFDPTWMILDILPVLPPDLRPMVQLDGGRFATSDLNDLYRRVINRNNRLARLQEIVAPELIIRNEKRMLQEAVDALIDNGKRGRAVVGLNNRPLKSLSDIIEGKQGRFRQNLLGKRVDYSGRSVIIVGPELKLNQCGLPSEMAIELFQPFVIHRLIYEGLVNNIKAAKSIIQKNGPLAWEILANVMEGHPILLNRAPTLHRLGIQSFEPILVSGRAIRLHPLVCPAFNADFDGDQMAVHIPLSLEAQSEARLLMLAPNNFLSPATGDAILTPSQDMVLGCFYLTANNPSQQLNKNHYFSDFEDAILAYQNSQIHLHTFIWVRCNNVDLTEDETCSQTQSGNLILTHGADIKSKQSSSQDTKTKYIRTTPGRILLNEIFQ</sequence>
<dbReference type="EC" id="2.7.7.6" evidence="1"/>
<dbReference type="EMBL" id="AY741371">
    <property type="protein sequence ID" value="AAX13860.1"/>
    <property type="molecule type" value="Genomic_DNA"/>
</dbReference>
<dbReference type="RefSeq" id="YP_277361.1">
    <property type="nucleotide sequence ID" value="NC_007288.1"/>
</dbReference>
<dbReference type="SMR" id="Q4G3A6"/>
<dbReference type="STRING" id="2903.Q4G3A6"/>
<dbReference type="GeneID" id="3562437"/>
<dbReference type="GO" id="GO:0009507">
    <property type="term" value="C:chloroplast"/>
    <property type="evidence" value="ECO:0007669"/>
    <property type="project" value="UniProtKB-SubCell"/>
</dbReference>
<dbReference type="GO" id="GO:0000428">
    <property type="term" value="C:DNA-directed RNA polymerase complex"/>
    <property type="evidence" value="ECO:0007669"/>
    <property type="project" value="UniProtKB-KW"/>
</dbReference>
<dbReference type="GO" id="GO:0005739">
    <property type="term" value="C:mitochondrion"/>
    <property type="evidence" value="ECO:0007669"/>
    <property type="project" value="GOC"/>
</dbReference>
<dbReference type="GO" id="GO:0003677">
    <property type="term" value="F:DNA binding"/>
    <property type="evidence" value="ECO:0007669"/>
    <property type="project" value="UniProtKB-UniRule"/>
</dbReference>
<dbReference type="GO" id="GO:0003899">
    <property type="term" value="F:DNA-directed RNA polymerase activity"/>
    <property type="evidence" value="ECO:0007669"/>
    <property type="project" value="UniProtKB-UniRule"/>
</dbReference>
<dbReference type="GO" id="GO:0000287">
    <property type="term" value="F:magnesium ion binding"/>
    <property type="evidence" value="ECO:0007669"/>
    <property type="project" value="UniProtKB-UniRule"/>
</dbReference>
<dbReference type="GO" id="GO:0008270">
    <property type="term" value="F:zinc ion binding"/>
    <property type="evidence" value="ECO:0007669"/>
    <property type="project" value="UniProtKB-UniRule"/>
</dbReference>
<dbReference type="GO" id="GO:0006351">
    <property type="term" value="P:DNA-templated transcription"/>
    <property type="evidence" value="ECO:0007669"/>
    <property type="project" value="UniProtKB-UniRule"/>
</dbReference>
<dbReference type="Gene3D" id="1.10.40.90">
    <property type="match status" value="1"/>
</dbReference>
<dbReference type="Gene3D" id="2.40.40.20">
    <property type="match status" value="1"/>
</dbReference>
<dbReference type="Gene3D" id="4.10.860.120">
    <property type="entry name" value="RNA polymerase II, clamp domain"/>
    <property type="match status" value="1"/>
</dbReference>
<dbReference type="Gene3D" id="1.10.274.100">
    <property type="entry name" value="RNA polymerase Rpb1, domain 3"/>
    <property type="match status" value="1"/>
</dbReference>
<dbReference type="HAMAP" id="MF_01323">
    <property type="entry name" value="RNApol_bact_RpoC1"/>
    <property type="match status" value="1"/>
</dbReference>
<dbReference type="InterPro" id="IPR012755">
    <property type="entry name" value="DNA-dir_RpoC1_gamma"/>
</dbReference>
<dbReference type="InterPro" id="IPR045867">
    <property type="entry name" value="DNA-dir_RpoC_beta_prime"/>
</dbReference>
<dbReference type="InterPro" id="IPR000722">
    <property type="entry name" value="RNA_pol_asu"/>
</dbReference>
<dbReference type="InterPro" id="IPR006592">
    <property type="entry name" value="RNA_pol_N"/>
</dbReference>
<dbReference type="InterPro" id="IPR007080">
    <property type="entry name" value="RNA_pol_Rpb1_1"/>
</dbReference>
<dbReference type="InterPro" id="IPR007066">
    <property type="entry name" value="RNA_pol_Rpb1_3"/>
</dbReference>
<dbReference type="InterPro" id="IPR042102">
    <property type="entry name" value="RNA_pol_Rpb1_3_sf"/>
</dbReference>
<dbReference type="InterPro" id="IPR044893">
    <property type="entry name" value="RNA_pol_Rpb1_clamp_domain"/>
</dbReference>
<dbReference type="InterPro" id="IPR034678">
    <property type="entry name" value="RNApol_RpoC1"/>
</dbReference>
<dbReference type="NCBIfam" id="TIGR02387">
    <property type="entry name" value="rpoC1_cyan"/>
    <property type="match status" value="1"/>
</dbReference>
<dbReference type="PANTHER" id="PTHR19376">
    <property type="entry name" value="DNA-DIRECTED RNA POLYMERASE"/>
    <property type="match status" value="1"/>
</dbReference>
<dbReference type="PANTHER" id="PTHR19376:SF54">
    <property type="entry name" value="DNA-DIRECTED RNA POLYMERASE SUBUNIT BETA"/>
    <property type="match status" value="1"/>
</dbReference>
<dbReference type="Pfam" id="PF04997">
    <property type="entry name" value="RNA_pol_Rpb1_1"/>
    <property type="match status" value="1"/>
</dbReference>
<dbReference type="Pfam" id="PF00623">
    <property type="entry name" value="RNA_pol_Rpb1_2"/>
    <property type="match status" value="2"/>
</dbReference>
<dbReference type="Pfam" id="PF04983">
    <property type="entry name" value="RNA_pol_Rpb1_3"/>
    <property type="match status" value="1"/>
</dbReference>
<dbReference type="SMART" id="SM00663">
    <property type="entry name" value="RPOLA_N"/>
    <property type="match status" value="1"/>
</dbReference>
<dbReference type="SUPFAM" id="SSF64484">
    <property type="entry name" value="beta and beta-prime subunits of DNA dependent RNA-polymerase"/>
    <property type="match status" value="1"/>
</dbReference>
<proteinExistence type="inferred from homology"/>
<keyword id="KW-0150">Chloroplast</keyword>
<keyword id="KW-0240">DNA-directed RNA polymerase</keyword>
<keyword id="KW-0460">Magnesium</keyword>
<keyword id="KW-0479">Metal-binding</keyword>
<keyword id="KW-0548">Nucleotidyltransferase</keyword>
<keyword id="KW-0934">Plastid</keyword>
<keyword id="KW-0804">Transcription</keyword>
<keyword id="KW-0808">Transferase</keyword>
<keyword id="KW-0862">Zinc</keyword>
<organism>
    <name type="scientific">Emiliania huxleyi</name>
    <name type="common">Coccolithophore</name>
    <name type="synonym">Pontosphaera huxleyi</name>
    <dbReference type="NCBI Taxonomy" id="2903"/>
    <lineage>
        <taxon>Eukaryota</taxon>
        <taxon>Haptista</taxon>
        <taxon>Haptophyta</taxon>
        <taxon>Prymnesiophyceae</taxon>
        <taxon>Isochrysidales</taxon>
        <taxon>Noelaerhabdaceae</taxon>
        <taxon>Emiliania</taxon>
    </lineage>
</organism>
<comment type="function">
    <text evidence="1">DNA-dependent RNA polymerase catalyzes the transcription of DNA into RNA using the four ribonucleoside triphosphates as substrates.</text>
</comment>
<comment type="catalytic activity">
    <reaction evidence="1">
        <text>RNA(n) + a ribonucleoside 5'-triphosphate = RNA(n+1) + diphosphate</text>
        <dbReference type="Rhea" id="RHEA:21248"/>
        <dbReference type="Rhea" id="RHEA-COMP:14527"/>
        <dbReference type="Rhea" id="RHEA-COMP:17342"/>
        <dbReference type="ChEBI" id="CHEBI:33019"/>
        <dbReference type="ChEBI" id="CHEBI:61557"/>
        <dbReference type="ChEBI" id="CHEBI:140395"/>
        <dbReference type="EC" id="2.7.7.6"/>
    </reaction>
</comment>
<comment type="cofactor">
    <cofactor evidence="1">
        <name>Mg(2+)</name>
        <dbReference type="ChEBI" id="CHEBI:18420"/>
    </cofactor>
    <text evidence="1">Binds 1 Mg(2+) ion per subunit.</text>
</comment>
<comment type="cofactor">
    <cofactor evidence="1">
        <name>Zn(2+)</name>
        <dbReference type="ChEBI" id="CHEBI:29105"/>
    </cofactor>
    <text evidence="1">Binds 1 Zn(2+) ion per subunit.</text>
</comment>
<comment type="subunit">
    <text evidence="1">In plastids the minimal PEP RNA polymerase catalytic core is composed of four subunits: alpha, beta, beta', and beta''. When a (nuclear-encoded) sigma factor is associated with the core the holoenzyme is formed, which can initiate transcription.</text>
</comment>
<comment type="subcellular location">
    <subcellularLocation>
        <location evidence="1">Plastid</location>
        <location evidence="1">Chloroplast</location>
    </subcellularLocation>
</comment>
<comment type="similarity">
    <text evidence="1">Belongs to the RNA polymerase beta' chain family. RpoC1 subfamily.</text>
</comment>
<reference key="1">
    <citation type="journal article" date="2005" name="DNA Res.">
        <title>The complete plastid genome sequence of the haptophyte Emiliania huxleyi: a comparison to other plastid genomes.</title>
        <authorList>
            <person name="Sanchez-Puerta M.V."/>
            <person name="Bachvaroff T.R."/>
            <person name="Delwiche C.F."/>
        </authorList>
    </citation>
    <scope>NUCLEOTIDE SEQUENCE [LARGE SCALE GENOMIC DNA]</scope>
    <source>
        <strain>CCMP373 / CSIRO-CS-57 / BT6</strain>
    </source>
</reference>
<accession>Q4G3A6</accession>
<gene>
    <name evidence="1" type="primary">rpoC1</name>
</gene>
<feature type="chain" id="PRO_0000225320" description="DNA-directed RNA polymerase subunit beta'">
    <location>
        <begin position="1"/>
        <end position="609"/>
    </location>
</feature>
<feature type="binding site" evidence="1">
    <location>
        <position position="67"/>
    </location>
    <ligand>
        <name>Zn(2+)</name>
        <dbReference type="ChEBI" id="CHEBI:29105"/>
    </ligand>
</feature>
<feature type="binding site" evidence="1">
    <location>
        <position position="69"/>
    </location>
    <ligand>
        <name>Zn(2+)</name>
        <dbReference type="ChEBI" id="CHEBI:29105"/>
    </ligand>
</feature>
<feature type="binding site" evidence="1">
    <location>
        <position position="82"/>
    </location>
    <ligand>
        <name>Zn(2+)</name>
        <dbReference type="ChEBI" id="CHEBI:29105"/>
    </ligand>
</feature>
<feature type="binding site" evidence="1">
    <location>
        <position position="85"/>
    </location>
    <ligand>
        <name>Zn(2+)</name>
        <dbReference type="ChEBI" id="CHEBI:29105"/>
    </ligand>
</feature>
<feature type="binding site" evidence="1">
    <location>
        <position position="460"/>
    </location>
    <ligand>
        <name>Mg(2+)</name>
        <dbReference type="ChEBI" id="CHEBI:18420"/>
    </ligand>
</feature>
<feature type="binding site" evidence="1">
    <location>
        <position position="462"/>
    </location>
    <ligand>
        <name>Mg(2+)</name>
        <dbReference type="ChEBI" id="CHEBI:18420"/>
    </ligand>
</feature>
<feature type="binding site" evidence="1">
    <location>
        <position position="464"/>
    </location>
    <ligand>
        <name>Mg(2+)</name>
        <dbReference type="ChEBI" id="CHEBI:18420"/>
    </ligand>
</feature>
<geneLocation type="chloroplast"/>
<protein>
    <recommendedName>
        <fullName evidence="1">DNA-directed RNA polymerase subunit beta'</fullName>
        <ecNumber evidence="1">2.7.7.6</ecNumber>
    </recommendedName>
    <alternativeName>
        <fullName evidence="1">PEP</fullName>
    </alternativeName>
    <alternativeName>
        <fullName evidence="1">Plastid-encoded RNA polymerase subunit beta'</fullName>
        <shortName evidence="1">RNA polymerase subunit beta'</shortName>
    </alternativeName>
</protein>